<protein>
    <recommendedName>
        <fullName>Ezy-1 protein</fullName>
    </recommendedName>
</protein>
<evidence type="ECO:0000256" key="1">
    <source>
        <dbReference type="SAM" id="MobiDB-lite"/>
    </source>
</evidence>
<gene>
    <name type="primary">Ezy-1</name>
</gene>
<feature type="chain" id="PRO_0000087147" description="Ezy-1 protein">
    <location>
        <begin position="1" status="less than"/>
        <end position="297"/>
    </location>
</feature>
<feature type="region of interest" description="Disordered" evidence="1">
    <location>
        <begin position="1"/>
        <end position="34"/>
    </location>
</feature>
<feature type="region of interest" description="Disordered" evidence="1">
    <location>
        <begin position="115"/>
        <end position="151"/>
    </location>
</feature>
<feature type="region of interest" description="Disordered" evidence="1">
    <location>
        <begin position="255"/>
        <end position="297"/>
    </location>
</feature>
<feature type="compositionally biased region" description="Acidic residues" evidence="1">
    <location>
        <begin position="123"/>
        <end position="135"/>
    </location>
</feature>
<feature type="compositionally biased region" description="Low complexity" evidence="1">
    <location>
        <begin position="136"/>
        <end position="150"/>
    </location>
</feature>
<feature type="compositionally biased region" description="Basic and acidic residues" evidence="1">
    <location>
        <begin position="259"/>
        <end position="269"/>
    </location>
</feature>
<feature type="non-terminal residue">
    <location>
        <position position="1"/>
    </location>
</feature>
<sequence length="297" mass="30965">MAAVVGTGSDGGGDESGDRRTADAADADGDGDGGERAWLRFKADVRACLADLRNRKGGITLHRAIVKDMVSASSNPGARRSSSSVVKMAREELDRLMPFLLDDFLDNMPGLKAAFTGKAEPGAEGDDGEDEEEGEAQGVGKDAVDSSSSSSGGGGVLSCTAWQQVLGRTVPAVSPTLALVLACGYLAMAPRQYRALALVPMILPGKTGGGVDGALTREGLSLLKKLRPGISGLADKDKQWLEWVIARLAAEFAVQPAGDGHEPEPKRPELPPTAVQREPPAEEQHKPTAGARDSPNM</sequence>
<proteinExistence type="evidence at transcript level"/>
<dbReference type="EMBL" id="L20947">
    <property type="protein sequence ID" value="AAC37351.1"/>
    <property type="molecule type" value="mRNA"/>
</dbReference>
<dbReference type="PaxDb" id="3055-EDO95966"/>
<organism>
    <name type="scientific">Chlamydomonas reinhardtii</name>
    <name type="common">Chlamydomonas smithii</name>
    <dbReference type="NCBI Taxonomy" id="3055"/>
    <lineage>
        <taxon>Eukaryota</taxon>
        <taxon>Viridiplantae</taxon>
        <taxon>Chlorophyta</taxon>
        <taxon>core chlorophytes</taxon>
        <taxon>Chlorophyceae</taxon>
        <taxon>CS clade</taxon>
        <taxon>Chlamydomonadales</taxon>
        <taxon>Chlamydomonadaceae</taxon>
        <taxon>Chlamydomonas</taxon>
    </lineage>
</organism>
<accession>Q08356</accession>
<reference key="1">
    <citation type="journal article" date="1993" name="Cell">
        <title>A mating type-linked gene cluster expressed in Chlamydomonas zygotes participates in the uniparental inheritance of the chloroplast genome.</title>
        <authorList>
            <person name="Armbrust E.V."/>
            <person name="Ferris P.J."/>
            <person name="Goodenough U.W."/>
        </authorList>
    </citation>
    <scope>NUCLEOTIDE SEQUENCE [MRNA]</scope>
</reference>
<name>EZY3_CHLRE</name>